<comment type="function">
    <text evidence="1">Involved in the regulation of the intracellular balance of NAD and NADP, and is a key enzyme in the biosynthesis of NADP. Catalyzes specifically the phosphorylation on 2'-hydroxyl of the adenosine moiety of NAD to yield NADP.</text>
</comment>
<comment type="catalytic activity">
    <reaction evidence="1">
        <text>NAD(+) + ATP = ADP + NADP(+) + H(+)</text>
        <dbReference type="Rhea" id="RHEA:18629"/>
        <dbReference type="ChEBI" id="CHEBI:15378"/>
        <dbReference type="ChEBI" id="CHEBI:30616"/>
        <dbReference type="ChEBI" id="CHEBI:57540"/>
        <dbReference type="ChEBI" id="CHEBI:58349"/>
        <dbReference type="ChEBI" id="CHEBI:456216"/>
        <dbReference type="EC" id="2.7.1.23"/>
    </reaction>
</comment>
<comment type="cofactor">
    <cofactor evidence="1">
        <name>a divalent metal cation</name>
        <dbReference type="ChEBI" id="CHEBI:60240"/>
    </cofactor>
</comment>
<comment type="subcellular location">
    <subcellularLocation>
        <location evidence="1">Cytoplasm</location>
    </subcellularLocation>
</comment>
<comment type="similarity">
    <text evidence="1">Belongs to the NAD kinase family.</text>
</comment>
<gene>
    <name evidence="1" type="primary">nadK</name>
    <name type="ordered locus">MPN_267</name>
    <name type="ORF">MP566</name>
</gene>
<name>NADK_MYCPN</name>
<feature type="chain" id="PRO_0000120638" description="NAD kinase">
    <location>
        <begin position="1"/>
        <end position="259"/>
    </location>
</feature>
<feature type="active site" description="Proton acceptor" evidence="1">
    <location>
        <position position="43"/>
    </location>
</feature>
<feature type="binding site" evidence="1">
    <location>
        <begin position="43"/>
        <end position="44"/>
    </location>
    <ligand>
        <name>NAD(+)</name>
        <dbReference type="ChEBI" id="CHEBI:57540"/>
    </ligand>
</feature>
<feature type="binding site" evidence="1">
    <location>
        <begin position="111"/>
        <end position="112"/>
    </location>
    <ligand>
        <name>NAD(+)</name>
        <dbReference type="ChEBI" id="CHEBI:57540"/>
    </ligand>
</feature>
<feature type="binding site" evidence="1">
    <location>
        <position position="136"/>
    </location>
    <ligand>
        <name>NAD(+)</name>
        <dbReference type="ChEBI" id="CHEBI:57540"/>
    </ligand>
</feature>
<reference key="1">
    <citation type="journal article" date="1996" name="Nucleic Acids Res.">
        <title>Complete sequence analysis of the genome of the bacterium Mycoplasma pneumoniae.</title>
        <authorList>
            <person name="Himmelreich R."/>
            <person name="Hilbert H."/>
            <person name="Plagens H."/>
            <person name="Pirkl E."/>
            <person name="Li B.-C."/>
            <person name="Herrmann R."/>
        </authorList>
    </citation>
    <scope>NUCLEOTIDE SEQUENCE [LARGE SCALE GENOMIC DNA]</scope>
    <source>
        <strain>ATCC 29342 / M129 / Subtype 1</strain>
    </source>
</reference>
<evidence type="ECO:0000255" key="1">
    <source>
        <dbReference type="HAMAP-Rule" id="MF_00361"/>
    </source>
</evidence>
<organism>
    <name type="scientific">Mycoplasma pneumoniae (strain ATCC 29342 / M129 / Subtype 1)</name>
    <name type="common">Mycoplasmoides pneumoniae</name>
    <dbReference type="NCBI Taxonomy" id="272634"/>
    <lineage>
        <taxon>Bacteria</taxon>
        <taxon>Bacillati</taxon>
        <taxon>Mycoplasmatota</taxon>
        <taxon>Mycoplasmoidales</taxon>
        <taxon>Mycoplasmoidaceae</taxon>
        <taxon>Mycoplasmoides</taxon>
    </lineage>
</organism>
<sequence length="259" mass="29034">MKYKIFASTTPQTEPVLQKLKQVLKGCEAVEKGFDYLFVLGGDGFFVSTVANYNCHNCRVVGINTGHLGFYTSFNEKDLDDNFLQKLQQCHFQRISLLEVSVNGQQHLVLNELAVYTNTAYPINIFIDGEAWEFYRGSGLLIGPRTGSTALAKSAKGAVIFPGIDVLQIIEMNPLLHPNQVTIQSPIILPKETQVEFVVKKAFNPQQFPTFYCDGRKLELPNADTTLALKLVQSTPMFNISLKTQDFINKLKSTFIKQS</sequence>
<dbReference type="EC" id="2.7.1.23" evidence="1"/>
<dbReference type="EMBL" id="U00089">
    <property type="protein sequence ID" value="AAB96214.1"/>
    <property type="molecule type" value="Genomic_DNA"/>
</dbReference>
<dbReference type="PIR" id="S73892">
    <property type="entry name" value="S73892"/>
</dbReference>
<dbReference type="RefSeq" id="NP_109955.1">
    <property type="nucleotide sequence ID" value="NC_000912.1"/>
</dbReference>
<dbReference type="RefSeq" id="WP_010874624.1">
    <property type="nucleotide sequence ID" value="NZ_OU342337.1"/>
</dbReference>
<dbReference type="SMR" id="P75508"/>
<dbReference type="IntAct" id="P75508">
    <property type="interactions" value="1"/>
</dbReference>
<dbReference type="STRING" id="272634.MPN_267"/>
<dbReference type="EnsemblBacteria" id="AAB96214">
    <property type="protein sequence ID" value="AAB96214"/>
    <property type="gene ID" value="MPN_267"/>
</dbReference>
<dbReference type="KEGG" id="mpn:MPN_267"/>
<dbReference type="PATRIC" id="fig|272634.6.peg.286"/>
<dbReference type="HOGENOM" id="CLU_008831_0_3_14"/>
<dbReference type="OrthoDB" id="9774737at2"/>
<dbReference type="BioCyc" id="MPNE272634:G1GJ3-418-MONOMER"/>
<dbReference type="Proteomes" id="UP000000808">
    <property type="component" value="Chromosome"/>
</dbReference>
<dbReference type="GO" id="GO:0005737">
    <property type="term" value="C:cytoplasm"/>
    <property type="evidence" value="ECO:0007669"/>
    <property type="project" value="UniProtKB-SubCell"/>
</dbReference>
<dbReference type="GO" id="GO:0005524">
    <property type="term" value="F:ATP binding"/>
    <property type="evidence" value="ECO:0007669"/>
    <property type="project" value="UniProtKB-KW"/>
</dbReference>
<dbReference type="GO" id="GO:0046872">
    <property type="term" value="F:metal ion binding"/>
    <property type="evidence" value="ECO:0007669"/>
    <property type="project" value="UniProtKB-UniRule"/>
</dbReference>
<dbReference type="GO" id="GO:0051287">
    <property type="term" value="F:NAD binding"/>
    <property type="evidence" value="ECO:0007669"/>
    <property type="project" value="UniProtKB-ARBA"/>
</dbReference>
<dbReference type="GO" id="GO:0003951">
    <property type="term" value="F:NAD+ kinase activity"/>
    <property type="evidence" value="ECO:0007669"/>
    <property type="project" value="UniProtKB-UniRule"/>
</dbReference>
<dbReference type="GO" id="GO:0019674">
    <property type="term" value="P:NAD metabolic process"/>
    <property type="evidence" value="ECO:0007669"/>
    <property type="project" value="InterPro"/>
</dbReference>
<dbReference type="GO" id="GO:0006741">
    <property type="term" value="P:NADP biosynthetic process"/>
    <property type="evidence" value="ECO:0007669"/>
    <property type="project" value="UniProtKB-UniRule"/>
</dbReference>
<dbReference type="Gene3D" id="3.40.50.10330">
    <property type="entry name" value="Probable inorganic polyphosphate/atp-NAD kinase, domain 1"/>
    <property type="match status" value="1"/>
</dbReference>
<dbReference type="Gene3D" id="2.60.200.30">
    <property type="entry name" value="Probable inorganic polyphosphate/atp-NAD kinase, domain 2"/>
    <property type="match status" value="1"/>
</dbReference>
<dbReference type="HAMAP" id="MF_00361">
    <property type="entry name" value="NAD_kinase"/>
    <property type="match status" value="1"/>
</dbReference>
<dbReference type="InterPro" id="IPR017438">
    <property type="entry name" value="ATP-NAD_kinase_N"/>
</dbReference>
<dbReference type="InterPro" id="IPR017437">
    <property type="entry name" value="ATP-NAD_kinase_PpnK-typ_C"/>
</dbReference>
<dbReference type="InterPro" id="IPR016064">
    <property type="entry name" value="NAD/diacylglycerol_kinase_sf"/>
</dbReference>
<dbReference type="InterPro" id="IPR002504">
    <property type="entry name" value="NADK"/>
</dbReference>
<dbReference type="NCBIfam" id="NF001838">
    <property type="entry name" value="PRK00561.1"/>
    <property type="match status" value="1"/>
</dbReference>
<dbReference type="PANTHER" id="PTHR20275">
    <property type="entry name" value="NAD KINASE"/>
    <property type="match status" value="1"/>
</dbReference>
<dbReference type="PANTHER" id="PTHR20275:SF0">
    <property type="entry name" value="NAD KINASE"/>
    <property type="match status" value="1"/>
</dbReference>
<dbReference type="Pfam" id="PF01513">
    <property type="entry name" value="NAD_kinase"/>
    <property type="match status" value="1"/>
</dbReference>
<dbReference type="Pfam" id="PF20143">
    <property type="entry name" value="NAD_kinase_C"/>
    <property type="match status" value="1"/>
</dbReference>
<dbReference type="SUPFAM" id="SSF111331">
    <property type="entry name" value="NAD kinase/diacylglycerol kinase-like"/>
    <property type="match status" value="1"/>
</dbReference>
<proteinExistence type="inferred from homology"/>
<keyword id="KW-0067">ATP-binding</keyword>
<keyword id="KW-0963">Cytoplasm</keyword>
<keyword id="KW-0418">Kinase</keyword>
<keyword id="KW-0520">NAD</keyword>
<keyword id="KW-0521">NADP</keyword>
<keyword id="KW-0547">Nucleotide-binding</keyword>
<keyword id="KW-1185">Reference proteome</keyword>
<keyword id="KW-0808">Transferase</keyword>
<accession>P75508</accession>
<protein>
    <recommendedName>
        <fullName evidence="1">NAD kinase</fullName>
        <ecNumber evidence="1">2.7.1.23</ecNumber>
    </recommendedName>
    <alternativeName>
        <fullName evidence="1">ATP-dependent NAD kinase</fullName>
    </alternativeName>
</protein>